<accession>P58689</accession>
<reference key="1">
    <citation type="journal article" date="1993" name="Toxicon">
        <title>Purification and partial characterization of two cytolysins from a tropical sea anemone, Heteractis magnifica.</title>
        <authorList>
            <person name="Khoo K.S."/>
            <person name="Kam W.K."/>
            <person name="Khoo H.E."/>
            <person name="Gopalakrishnakone P."/>
            <person name="Chung M.C."/>
        </authorList>
    </citation>
    <scope>PROTEIN SEQUENCE</scope>
    <scope>FUNCTION</scope>
    <scope>TOXIC DOSE</scope>
</reference>
<reference key="2">
    <citation type="journal article" date="2009" name="Toxicon">
        <title>Molecular mechanism of pore formation by actinoporins.</title>
        <authorList>
            <person name="Kristan K.C."/>
            <person name="Viero G."/>
            <person name="Dalla Serra M."/>
            <person name="Macek P."/>
            <person name="Anderluh G."/>
        </authorList>
    </citation>
    <scope>REVIEW</scope>
</reference>
<evidence type="ECO:0000250" key="1">
    <source>
        <dbReference type="UniProtKB" id="B9W5G6"/>
    </source>
</evidence>
<evidence type="ECO:0000250" key="2">
    <source>
        <dbReference type="UniProtKB" id="P07845"/>
    </source>
</evidence>
<evidence type="ECO:0000250" key="3">
    <source>
        <dbReference type="UniProtKB" id="P61914"/>
    </source>
</evidence>
<evidence type="ECO:0000269" key="4">
    <source>
    </source>
</evidence>
<evidence type="ECO:0000303" key="5">
    <source>
    </source>
</evidence>
<evidence type="ECO:0000305" key="6"/>
<proteinExistence type="evidence at protein level"/>
<sequence>ALAGTIIAGASLTFKILDEV</sequence>
<name>ACT21_HETMG</name>
<comment type="function">
    <text evidence="4">Pore-forming protein that forms cations-selective hydrophilic pores of around 1 nm and causes cytolysis. Pore formation is a multi-step process that involves specific recognition of membrane sphingomyelin (but neither cholesterol nor phosphatidylcholine) using aromatic rich region and adjacent phosphocholine (POC) binding site, firm binding to the membrane (mainly driven by hydrophobic interactions) accompanied by the transfer of the N-terminal region to the lipid-water interface and finally pore formation after oligomerization of monomers.</text>
</comment>
<comment type="subunit">
    <text evidence="1">Octamer or nonamer in membranes. Monomer in the soluble state.</text>
</comment>
<comment type="subcellular location">
    <subcellularLocation>
        <location evidence="1">Secreted</location>
    </subcellularLocation>
    <subcellularLocation>
        <location evidence="2">Nematocyst</location>
    </subcellularLocation>
    <subcellularLocation>
        <location evidence="1">Target cell membrane</location>
    </subcellularLocation>
    <text evidence="1">Forms an alpha-helical membrane channel in the prey.</text>
</comment>
<comment type="domain">
    <text evidence="3">Composed of a long N-terminal alpha-helix and a core region rich in beta-sheet structures. Before the pore formation, the alpha-helix binds the lipid membrane, partitions into the lipid-water interface and stabilizes the monomeric molecule on the membrane. Finally, it traverses the bilayer, thus forming the transmembrane pore.</text>
</comment>
<comment type="toxic dose">
    <text evidence="4">LD(50) is 140 ug/kg by intravenous injection into mice.</text>
</comment>
<comment type="miscellaneous">
    <text>Hemolytic activity is 3.6 x 10(4) HU/mg.</text>
</comment>
<comment type="miscellaneous">
    <text evidence="6">A synonymy between H.magnifica and R.crispa is controversial.</text>
</comment>
<comment type="similarity">
    <text evidence="6">Belongs to the actinoporin family. Sea anemone subfamily.</text>
</comment>
<dbReference type="GO" id="GO:0005576">
    <property type="term" value="C:extracellular region"/>
    <property type="evidence" value="ECO:0007669"/>
    <property type="project" value="UniProtKB-SubCell"/>
</dbReference>
<dbReference type="GO" id="GO:0016020">
    <property type="term" value="C:membrane"/>
    <property type="evidence" value="ECO:0007669"/>
    <property type="project" value="UniProtKB-KW"/>
</dbReference>
<dbReference type="GO" id="GO:0042151">
    <property type="term" value="C:nematocyst"/>
    <property type="evidence" value="ECO:0007669"/>
    <property type="project" value="UniProtKB-SubCell"/>
</dbReference>
<dbReference type="GO" id="GO:0044218">
    <property type="term" value="C:other organism cell membrane"/>
    <property type="evidence" value="ECO:0007669"/>
    <property type="project" value="UniProtKB-KW"/>
</dbReference>
<dbReference type="GO" id="GO:0090729">
    <property type="term" value="F:toxin activity"/>
    <property type="evidence" value="ECO:0007669"/>
    <property type="project" value="UniProtKB-KW"/>
</dbReference>
<dbReference type="GO" id="GO:0031640">
    <property type="term" value="P:killing of cells of another organism"/>
    <property type="evidence" value="ECO:0007669"/>
    <property type="project" value="UniProtKB-KW"/>
</dbReference>
<dbReference type="GO" id="GO:0006811">
    <property type="term" value="P:monoatomic ion transport"/>
    <property type="evidence" value="ECO:0007669"/>
    <property type="project" value="UniProtKB-KW"/>
</dbReference>
<protein>
    <recommendedName>
        <fullName evidence="5">Magnificalysin I</fullName>
        <shortName>HMg I</shortName>
    </recommendedName>
    <alternativeName>
        <fullName>Cytolysin I</fullName>
    </alternativeName>
    <alternativeName>
        <fullName evidence="6">DELTA-stichotoxin</fullName>
    </alternativeName>
</protein>
<feature type="chain" id="PRO_0000221534" description="Magnificalysin I">
    <location>
        <begin position="1"/>
        <end position="20" status="greater than"/>
    </location>
</feature>
<feature type="region of interest" description="Plays an important role in the hemolytic activity" evidence="2">
    <location>
        <begin position="1"/>
        <end position="10"/>
    </location>
</feature>
<feature type="region of interest" description="N-terminal region" evidence="3">
    <location>
        <begin position="9"/>
        <end position="20" status="greater than"/>
    </location>
</feature>
<feature type="non-terminal residue">
    <location>
        <position position="20"/>
    </location>
</feature>
<keyword id="KW-0204">Cytolysis</keyword>
<keyword id="KW-0903">Direct protein sequencing</keyword>
<keyword id="KW-0406">Ion transport</keyword>
<keyword id="KW-0472">Membrane</keyword>
<keyword id="KW-0166">Nematocyst</keyword>
<keyword id="KW-0964">Secreted</keyword>
<keyword id="KW-1052">Target cell membrane</keyword>
<keyword id="KW-1053">Target membrane</keyword>
<keyword id="KW-0800">Toxin</keyword>
<keyword id="KW-0812">Transmembrane</keyword>
<keyword id="KW-0813">Transport</keyword>
<organism>
    <name type="scientific">Heteractis magnifica</name>
    <name type="common">Magnificent sea anemone</name>
    <name type="synonym">Radianthus magnifica</name>
    <dbReference type="NCBI Taxonomy" id="38281"/>
    <lineage>
        <taxon>Eukaryota</taxon>
        <taxon>Metazoa</taxon>
        <taxon>Cnidaria</taxon>
        <taxon>Anthozoa</taxon>
        <taxon>Hexacorallia</taxon>
        <taxon>Actiniaria</taxon>
        <taxon>Stichodactylidae</taxon>
        <taxon>Heteractis</taxon>
    </lineage>
</organism>